<dbReference type="EC" id="7.1.1.-" evidence="1"/>
<dbReference type="EMBL" id="CT971583">
    <property type="protein sequence ID" value="CAK23156.1"/>
    <property type="molecule type" value="Genomic_DNA"/>
</dbReference>
<dbReference type="SMR" id="A5GJP1"/>
<dbReference type="STRING" id="32051.SynWH7803_0730"/>
<dbReference type="KEGG" id="syx:SynWH7803_0730"/>
<dbReference type="eggNOG" id="ENOG5032ZM4">
    <property type="taxonomic scope" value="Bacteria"/>
</dbReference>
<dbReference type="HOGENOM" id="CLU_171077_1_0_3"/>
<dbReference type="Proteomes" id="UP000001566">
    <property type="component" value="Chromosome"/>
</dbReference>
<dbReference type="GO" id="GO:0031676">
    <property type="term" value="C:plasma membrane-derived thylakoid membrane"/>
    <property type="evidence" value="ECO:0007669"/>
    <property type="project" value="UniProtKB-SubCell"/>
</dbReference>
<dbReference type="GO" id="GO:0016655">
    <property type="term" value="F:oxidoreductase activity, acting on NAD(P)H, quinone or similar compound as acceptor"/>
    <property type="evidence" value="ECO:0007669"/>
    <property type="project" value="UniProtKB-UniRule"/>
</dbReference>
<dbReference type="GO" id="GO:0048038">
    <property type="term" value="F:quinone binding"/>
    <property type="evidence" value="ECO:0007669"/>
    <property type="project" value="UniProtKB-KW"/>
</dbReference>
<dbReference type="HAMAP" id="MF_01355">
    <property type="entry name" value="NDH1_NDH1L"/>
    <property type="match status" value="1"/>
</dbReference>
<dbReference type="InterPro" id="IPR019654">
    <property type="entry name" value="NADH-quinone_OxRdatse_su_L"/>
</dbReference>
<dbReference type="PANTHER" id="PTHR36727">
    <property type="entry name" value="NAD(P)H-QUINONE OXIDOREDUCTASE SUBUNIT L, CHLOROPLASTIC"/>
    <property type="match status" value="1"/>
</dbReference>
<dbReference type="PANTHER" id="PTHR36727:SF2">
    <property type="entry name" value="NAD(P)H-QUINONE OXIDOREDUCTASE SUBUNIT L, CHLOROPLASTIC"/>
    <property type="match status" value="1"/>
</dbReference>
<dbReference type="Pfam" id="PF10716">
    <property type="entry name" value="NdhL"/>
    <property type="match status" value="1"/>
</dbReference>
<proteinExistence type="inferred from homology"/>
<protein>
    <recommendedName>
        <fullName evidence="1">NAD(P)H-quinone oxidoreductase subunit L</fullName>
        <ecNumber evidence="1">7.1.1.-</ecNumber>
    </recommendedName>
    <alternativeName>
        <fullName evidence="1">NAD(P)H dehydrogenase I subunit L</fullName>
    </alternativeName>
    <alternativeName>
        <fullName>NDH-1 subunit L</fullName>
    </alternativeName>
    <alternativeName>
        <fullName>NDH-L</fullName>
    </alternativeName>
</protein>
<evidence type="ECO:0000255" key="1">
    <source>
        <dbReference type="HAMAP-Rule" id="MF_01355"/>
    </source>
</evidence>
<reference key="1">
    <citation type="submission" date="2006-05" db="EMBL/GenBank/DDBJ databases">
        <authorList>
            <consortium name="Genoscope"/>
        </authorList>
    </citation>
    <scope>NUCLEOTIDE SEQUENCE [LARGE SCALE GENOMIC DNA]</scope>
    <source>
        <strain>WH7803</strain>
    </source>
</reference>
<keyword id="KW-0472">Membrane</keyword>
<keyword id="KW-0520">NAD</keyword>
<keyword id="KW-0521">NADP</keyword>
<keyword id="KW-0618">Plastoquinone</keyword>
<keyword id="KW-0874">Quinone</keyword>
<keyword id="KW-1185">Reference proteome</keyword>
<keyword id="KW-0793">Thylakoid</keyword>
<keyword id="KW-1278">Translocase</keyword>
<keyword id="KW-0812">Transmembrane</keyword>
<keyword id="KW-1133">Transmembrane helix</keyword>
<keyword id="KW-0813">Transport</keyword>
<name>NDHL_SYNPW</name>
<organism>
    <name type="scientific">Synechococcus sp. (strain WH7803)</name>
    <dbReference type="NCBI Taxonomy" id="32051"/>
    <lineage>
        <taxon>Bacteria</taxon>
        <taxon>Bacillati</taxon>
        <taxon>Cyanobacteriota</taxon>
        <taxon>Cyanophyceae</taxon>
        <taxon>Synechococcales</taxon>
        <taxon>Synechococcaceae</taxon>
        <taxon>Synechococcus</taxon>
    </lineage>
</organism>
<gene>
    <name evidence="1" type="primary">ndhL</name>
    <name type="ordered locus">SynWH7803_0730</name>
</gene>
<accession>A5GJP1</accession>
<comment type="function">
    <text evidence="1">NDH-1 shuttles electrons from an unknown electron donor, via FMN and iron-sulfur (Fe-S) centers, to quinones in the respiratory and/or the photosynthetic chain. The immediate electron acceptor for the enzyme in this species is believed to be plastoquinone. Couples the redox reaction to proton translocation, and thus conserves the redox energy in a proton gradient. Cyanobacterial NDH-1 also plays a role in inorganic carbon-concentration.</text>
</comment>
<comment type="catalytic activity">
    <reaction evidence="1">
        <text>a plastoquinone + NADH + (n+1) H(+)(in) = a plastoquinol + NAD(+) + n H(+)(out)</text>
        <dbReference type="Rhea" id="RHEA:42608"/>
        <dbReference type="Rhea" id="RHEA-COMP:9561"/>
        <dbReference type="Rhea" id="RHEA-COMP:9562"/>
        <dbReference type="ChEBI" id="CHEBI:15378"/>
        <dbReference type="ChEBI" id="CHEBI:17757"/>
        <dbReference type="ChEBI" id="CHEBI:57540"/>
        <dbReference type="ChEBI" id="CHEBI:57945"/>
        <dbReference type="ChEBI" id="CHEBI:62192"/>
    </reaction>
</comment>
<comment type="catalytic activity">
    <reaction evidence="1">
        <text>a plastoquinone + NADPH + (n+1) H(+)(in) = a plastoquinol + NADP(+) + n H(+)(out)</text>
        <dbReference type="Rhea" id="RHEA:42612"/>
        <dbReference type="Rhea" id="RHEA-COMP:9561"/>
        <dbReference type="Rhea" id="RHEA-COMP:9562"/>
        <dbReference type="ChEBI" id="CHEBI:15378"/>
        <dbReference type="ChEBI" id="CHEBI:17757"/>
        <dbReference type="ChEBI" id="CHEBI:57783"/>
        <dbReference type="ChEBI" id="CHEBI:58349"/>
        <dbReference type="ChEBI" id="CHEBI:62192"/>
    </reaction>
</comment>
<comment type="subunit">
    <text evidence="1">NDH-1 can be composed of about 15 different subunits; different subcomplexes with different compositions have been identified which probably have different functions.</text>
</comment>
<comment type="subcellular location">
    <subcellularLocation>
        <location evidence="1">Cellular thylakoid membrane</location>
        <topology evidence="1">Multi-pass membrane protein</topology>
    </subcellularLocation>
</comment>
<comment type="similarity">
    <text evidence="1">Belongs to the complex I NdhL subunit family.</text>
</comment>
<feature type="chain" id="PRO_0000353693" description="NAD(P)H-quinone oxidoreductase subunit L">
    <location>
        <begin position="1"/>
        <end position="81"/>
    </location>
</feature>
<feature type="transmembrane region" description="Helical" evidence="1">
    <location>
        <begin position="13"/>
        <end position="33"/>
    </location>
</feature>
<feature type="transmembrane region" description="Helical" evidence="1">
    <location>
        <begin position="51"/>
        <end position="71"/>
    </location>
</feature>
<sequence>METLLNAIPQETLLVIGAYGALGAAYLVVIPLFLYFWMNRRWTVMGKLERLGIYGLVFLFFPGLILFAPFLNLRMSGQGDV</sequence>